<name>SYD_CLOB1</name>
<comment type="function">
    <text evidence="1">Catalyzes the attachment of L-aspartate to tRNA(Asp) in a two-step reaction: L-aspartate is first activated by ATP to form Asp-AMP and then transferred to the acceptor end of tRNA(Asp).</text>
</comment>
<comment type="catalytic activity">
    <reaction evidence="1">
        <text>tRNA(Asp) + L-aspartate + ATP = L-aspartyl-tRNA(Asp) + AMP + diphosphate</text>
        <dbReference type="Rhea" id="RHEA:19649"/>
        <dbReference type="Rhea" id="RHEA-COMP:9660"/>
        <dbReference type="Rhea" id="RHEA-COMP:9678"/>
        <dbReference type="ChEBI" id="CHEBI:29991"/>
        <dbReference type="ChEBI" id="CHEBI:30616"/>
        <dbReference type="ChEBI" id="CHEBI:33019"/>
        <dbReference type="ChEBI" id="CHEBI:78442"/>
        <dbReference type="ChEBI" id="CHEBI:78516"/>
        <dbReference type="ChEBI" id="CHEBI:456215"/>
        <dbReference type="EC" id="6.1.1.12"/>
    </reaction>
</comment>
<comment type="subunit">
    <text evidence="1">Homodimer.</text>
</comment>
<comment type="subcellular location">
    <subcellularLocation>
        <location evidence="1">Cytoplasm</location>
    </subcellularLocation>
</comment>
<comment type="similarity">
    <text evidence="1">Belongs to the class-II aminoacyl-tRNA synthetase family. Type 1 subfamily.</text>
</comment>
<dbReference type="EC" id="6.1.1.12" evidence="1"/>
<dbReference type="EMBL" id="CP000726">
    <property type="protein sequence ID" value="ABS33373.1"/>
    <property type="molecule type" value="Genomic_DNA"/>
</dbReference>
<dbReference type="RefSeq" id="WP_012048075.1">
    <property type="nucleotide sequence ID" value="NC_009697.1"/>
</dbReference>
<dbReference type="SMR" id="A7FY03"/>
<dbReference type="GeneID" id="5185641"/>
<dbReference type="KEGG" id="cba:CLB_3083"/>
<dbReference type="HOGENOM" id="CLU_014330_3_2_9"/>
<dbReference type="GO" id="GO:0005737">
    <property type="term" value="C:cytoplasm"/>
    <property type="evidence" value="ECO:0007669"/>
    <property type="project" value="UniProtKB-SubCell"/>
</dbReference>
<dbReference type="GO" id="GO:0004815">
    <property type="term" value="F:aspartate-tRNA ligase activity"/>
    <property type="evidence" value="ECO:0007669"/>
    <property type="project" value="UniProtKB-UniRule"/>
</dbReference>
<dbReference type="GO" id="GO:0005524">
    <property type="term" value="F:ATP binding"/>
    <property type="evidence" value="ECO:0007669"/>
    <property type="project" value="UniProtKB-UniRule"/>
</dbReference>
<dbReference type="GO" id="GO:0140096">
    <property type="term" value="F:catalytic activity, acting on a protein"/>
    <property type="evidence" value="ECO:0007669"/>
    <property type="project" value="UniProtKB-ARBA"/>
</dbReference>
<dbReference type="GO" id="GO:0003676">
    <property type="term" value="F:nucleic acid binding"/>
    <property type="evidence" value="ECO:0007669"/>
    <property type="project" value="InterPro"/>
</dbReference>
<dbReference type="GO" id="GO:0016740">
    <property type="term" value="F:transferase activity"/>
    <property type="evidence" value="ECO:0007669"/>
    <property type="project" value="UniProtKB-ARBA"/>
</dbReference>
<dbReference type="GO" id="GO:0006422">
    <property type="term" value="P:aspartyl-tRNA aminoacylation"/>
    <property type="evidence" value="ECO:0007669"/>
    <property type="project" value="UniProtKB-UniRule"/>
</dbReference>
<dbReference type="CDD" id="cd00777">
    <property type="entry name" value="AspRS_core"/>
    <property type="match status" value="1"/>
</dbReference>
<dbReference type="CDD" id="cd04317">
    <property type="entry name" value="EcAspRS_like_N"/>
    <property type="match status" value="1"/>
</dbReference>
<dbReference type="Gene3D" id="3.30.930.10">
    <property type="entry name" value="Bira Bifunctional Protein, Domain 2"/>
    <property type="match status" value="1"/>
</dbReference>
<dbReference type="Gene3D" id="3.30.1360.30">
    <property type="entry name" value="GAD-like domain"/>
    <property type="match status" value="1"/>
</dbReference>
<dbReference type="Gene3D" id="2.40.50.140">
    <property type="entry name" value="Nucleic acid-binding proteins"/>
    <property type="match status" value="1"/>
</dbReference>
<dbReference type="HAMAP" id="MF_00044">
    <property type="entry name" value="Asp_tRNA_synth_type1"/>
    <property type="match status" value="1"/>
</dbReference>
<dbReference type="InterPro" id="IPR004364">
    <property type="entry name" value="Aa-tRNA-synt_II"/>
</dbReference>
<dbReference type="InterPro" id="IPR006195">
    <property type="entry name" value="aa-tRNA-synth_II"/>
</dbReference>
<dbReference type="InterPro" id="IPR045864">
    <property type="entry name" value="aa-tRNA-synth_II/BPL/LPL"/>
</dbReference>
<dbReference type="InterPro" id="IPR004524">
    <property type="entry name" value="Asp-tRNA-ligase_1"/>
</dbReference>
<dbReference type="InterPro" id="IPR047089">
    <property type="entry name" value="Asp-tRNA-ligase_1_N"/>
</dbReference>
<dbReference type="InterPro" id="IPR002312">
    <property type="entry name" value="Asp/Asn-tRNA-synth_IIb"/>
</dbReference>
<dbReference type="InterPro" id="IPR047090">
    <property type="entry name" value="AspRS_core"/>
</dbReference>
<dbReference type="InterPro" id="IPR004115">
    <property type="entry name" value="GAD-like_sf"/>
</dbReference>
<dbReference type="InterPro" id="IPR029351">
    <property type="entry name" value="GAD_dom"/>
</dbReference>
<dbReference type="InterPro" id="IPR012340">
    <property type="entry name" value="NA-bd_OB-fold"/>
</dbReference>
<dbReference type="InterPro" id="IPR004365">
    <property type="entry name" value="NA-bd_OB_tRNA"/>
</dbReference>
<dbReference type="NCBIfam" id="TIGR00459">
    <property type="entry name" value="aspS_bact"/>
    <property type="match status" value="1"/>
</dbReference>
<dbReference type="NCBIfam" id="NF001750">
    <property type="entry name" value="PRK00476.1"/>
    <property type="match status" value="1"/>
</dbReference>
<dbReference type="PANTHER" id="PTHR22594:SF5">
    <property type="entry name" value="ASPARTATE--TRNA LIGASE, MITOCHONDRIAL"/>
    <property type="match status" value="1"/>
</dbReference>
<dbReference type="PANTHER" id="PTHR22594">
    <property type="entry name" value="ASPARTYL/LYSYL-TRNA SYNTHETASE"/>
    <property type="match status" value="1"/>
</dbReference>
<dbReference type="Pfam" id="PF02938">
    <property type="entry name" value="GAD"/>
    <property type="match status" value="1"/>
</dbReference>
<dbReference type="Pfam" id="PF00152">
    <property type="entry name" value="tRNA-synt_2"/>
    <property type="match status" value="1"/>
</dbReference>
<dbReference type="Pfam" id="PF01336">
    <property type="entry name" value="tRNA_anti-codon"/>
    <property type="match status" value="1"/>
</dbReference>
<dbReference type="PRINTS" id="PR01042">
    <property type="entry name" value="TRNASYNTHASP"/>
</dbReference>
<dbReference type="SUPFAM" id="SSF55681">
    <property type="entry name" value="Class II aaRS and biotin synthetases"/>
    <property type="match status" value="1"/>
</dbReference>
<dbReference type="SUPFAM" id="SSF55261">
    <property type="entry name" value="GAD domain-like"/>
    <property type="match status" value="1"/>
</dbReference>
<dbReference type="SUPFAM" id="SSF50249">
    <property type="entry name" value="Nucleic acid-binding proteins"/>
    <property type="match status" value="1"/>
</dbReference>
<dbReference type="PROSITE" id="PS50862">
    <property type="entry name" value="AA_TRNA_LIGASE_II"/>
    <property type="match status" value="1"/>
</dbReference>
<accession>A7FY03</accession>
<gene>
    <name evidence="1" type="primary">aspS</name>
    <name type="ordered locus">CLB_3083</name>
</gene>
<feature type="chain" id="PRO_1000006661" description="Aspartate--tRNA ligase">
    <location>
        <begin position="1"/>
        <end position="593"/>
    </location>
</feature>
<feature type="region of interest" description="Aspartate" evidence="1">
    <location>
        <begin position="204"/>
        <end position="207"/>
    </location>
</feature>
<feature type="binding site" evidence="1">
    <location>
        <position position="180"/>
    </location>
    <ligand>
        <name>L-aspartate</name>
        <dbReference type="ChEBI" id="CHEBI:29991"/>
    </ligand>
</feature>
<feature type="binding site" evidence="1">
    <location>
        <begin position="226"/>
        <end position="228"/>
    </location>
    <ligand>
        <name>ATP</name>
        <dbReference type="ChEBI" id="CHEBI:30616"/>
    </ligand>
</feature>
<feature type="binding site" evidence="1">
    <location>
        <position position="226"/>
    </location>
    <ligand>
        <name>L-aspartate</name>
        <dbReference type="ChEBI" id="CHEBI:29991"/>
    </ligand>
</feature>
<feature type="binding site" evidence="1">
    <location>
        <position position="235"/>
    </location>
    <ligand>
        <name>ATP</name>
        <dbReference type="ChEBI" id="CHEBI:30616"/>
    </ligand>
</feature>
<feature type="binding site" evidence="1">
    <location>
        <position position="453"/>
    </location>
    <ligand>
        <name>L-aspartate</name>
        <dbReference type="ChEBI" id="CHEBI:29991"/>
    </ligand>
</feature>
<feature type="binding site" evidence="1">
    <location>
        <position position="487"/>
    </location>
    <ligand>
        <name>ATP</name>
        <dbReference type="ChEBI" id="CHEBI:30616"/>
    </ligand>
</feature>
<feature type="binding site" evidence="1">
    <location>
        <position position="494"/>
    </location>
    <ligand>
        <name>L-aspartate</name>
        <dbReference type="ChEBI" id="CHEBI:29991"/>
    </ligand>
</feature>
<feature type="binding site" evidence="1">
    <location>
        <begin position="539"/>
        <end position="542"/>
    </location>
    <ligand>
        <name>ATP</name>
        <dbReference type="ChEBI" id="CHEBI:30616"/>
    </ligand>
</feature>
<keyword id="KW-0030">Aminoacyl-tRNA synthetase</keyword>
<keyword id="KW-0067">ATP-binding</keyword>
<keyword id="KW-0963">Cytoplasm</keyword>
<keyword id="KW-0436">Ligase</keyword>
<keyword id="KW-0547">Nucleotide-binding</keyword>
<keyword id="KW-0648">Protein biosynthesis</keyword>
<evidence type="ECO:0000255" key="1">
    <source>
        <dbReference type="HAMAP-Rule" id="MF_00044"/>
    </source>
</evidence>
<reference key="1">
    <citation type="journal article" date="2007" name="PLoS ONE">
        <title>Analysis of the neurotoxin complex genes in Clostridium botulinum A1-A4 and B1 strains: BoNT/A3, /Ba4 and /B1 clusters are located within plasmids.</title>
        <authorList>
            <person name="Smith T.J."/>
            <person name="Hill K.K."/>
            <person name="Foley B.T."/>
            <person name="Detter J.C."/>
            <person name="Munk A.C."/>
            <person name="Bruce D.C."/>
            <person name="Doggett N.A."/>
            <person name="Smith L.A."/>
            <person name="Marks J.D."/>
            <person name="Xie G."/>
            <person name="Brettin T.S."/>
        </authorList>
    </citation>
    <scope>NUCLEOTIDE SEQUENCE [LARGE SCALE GENOMIC DNA]</scope>
    <source>
        <strain>ATCC 19397 / Type A</strain>
    </source>
</reference>
<proteinExistence type="inferred from homology"/>
<sequence length="593" mass="67808">MGEALRGLKRTIMCGESRENNIGQKVTVMGWVQRKRNLGGLIFVDLRDRTGIMQIVFGEEINKEAFEKSDNVKSEYCIAVTGEIVKRQSPNNDMETGAVELKGEDIKILSESETPPIYIKEGLDASENIRLKYRYLDLRRPDMQKIFMIRHKTCKVVRDFLDENGFLEMETPILTKSTPEGARDYLVPSRNYKGMFYALPQSPQIFKQLLMVSGYDKYFQITKCFRDEDLRANRQPEFTQIDMELSFVEEDDVIELNERLLAKVFKEVGGIDVKLPIERMPYKIAMEKYGSDKPDLRFGMEINDLTEAVKNSEFKVFKGAIEAGGSVRAIKAENCATMGRKQIDKLQDFVKTYKAKGLAWIAYKEDEIKSPIAKFLTEEEMKAILEKMDAKAGDLILIVADKNNVVFESLGALRLHIAKELDIINKNEFRFVWITEFPLLAYNEEEGRYQAEHHPFTAIMDEDIELLGTEPGKVRAKAYDIVLNGEELGGGSIRIHDSKFQEKMFSVLGFTKEKAWERFGFLLEAFKFGPPPHGGLAYGLDRMIMFLAGTENIKDVITFPKNQNAFCPLTEAPNVVDENQLEELGIKKIEKED</sequence>
<organism>
    <name type="scientific">Clostridium botulinum (strain ATCC 19397 / Type A)</name>
    <dbReference type="NCBI Taxonomy" id="441770"/>
    <lineage>
        <taxon>Bacteria</taxon>
        <taxon>Bacillati</taxon>
        <taxon>Bacillota</taxon>
        <taxon>Clostridia</taxon>
        <taxon>Eubacteriales</taxon>
        <taxon>Clostridiaceae</taxon>
        <taxon>Clostridium</taxon>
    </lineage>
</organism>
<protein>
    <recommendedName>
        <fullName evidence="1">Aspartate--tRNA ligase</fullName>
        <ecNumber evidence="1">6.1.1.12</ecNumber>
    </recommendedName>
    <alternativeName>
        <fullName evidence="1">Aspartyl-tRNA synthetase</fullName>
        <shortName evidence="1">AspRS</shortName>
    </alternativeName>
</protein>